<name>PIMT_VIBPA</name>
<feature type="chain" id="PRO_0000111907" description="Protein-L-isoaspartate O-methyltransferase">
    <location>
        <begin position="1"/>
        <end position="208"/>
    </location>
</feature>
<feature type="active site" evidence="1">
    <location>
        <position position="59"/>
    </location>
</feature>
<organism>
    <name type="scientific">Vibrio parahaemolyticus serotype O3:K6 (strain RIMD 2210633)</name>
    <dbReference type="NCBI Taxonomy" id="223926"/>
    <lineage>
        <taxon>Bacteria</taxon>
        <taxon>Pseudomonadati</taxon>
        <taxon>Pseudomonadota</taxon>
        <taxon>Gammaproteobacteria</taxon>
        <taxon>Vibrionales</taxon>
        <taxon>Vibrionaceae</taxon>
        <taxon>Vibrio</taxon>
    </lineage>
</organism>
<keyword id="KW-0963">Cytoplasm</keyword>
<keyword id="KW-0489">Methyltransferase</keyword>
<keyword id="KW-0949">S-adenosyl-L-methionine</keyword>
<keyword id="KW-0808">Transferase</keyword>
<proteinExistence type="inferred from homology"/>
<reference key="1">
    <citation type="journal article" date="2003" name="Lancet">
        <title>Genome sequence of Vibrio parahaemolyticus: a pathogenic mechanism distinct from that of V. cholerae.</title>
        <authorList>
            <person name="Makino K."/>
            <person name="Oshima K."/>
            <person name="Kurokawa K."/>
            <person name="Yokoyama K."/>
            <person name="Uda T."/>
            <person name="Tagomori K."/>
            <person name="Iijima Y."/>
            <person name="Najima M."/>
            <person name="Nakano M."/>
            <person name="Yamashita A."/>
            <person name="Kubota Y."/>
            <person name="Kimura S."/>
            <person name="Yasunaga T."/>
            <person name="Honda T."/>
            <person name="Shinagawa H."/>
            <person name="Hattori M."/>
            <person name="Iida T."/>
        </authorList>
    </citation>
    <scope>NUCLEOTIDE SEQUENCE [LARGE SCALE GENOMIC DNA]</scope>
    <source>
        <strain>RIMD 2210633</strain>
    </source>
</reference>
<evidence type="ECO:0000255" key="1">
    <source>
        <dbReference type="HAMAP-Rule" id="MF_00090"/>
    </source>
</evidence>
<comment type="function">
    <text evidence="1">Catalyzes the methyl esterification of L-isoaspartyl residues in peptides and proteins that result from spontaneous decomposition of normal L-aspartyl and L-asparaginyl residues. It plays a role in the repair and/or degradation of damaged proteins.</text>
</comment>
<comment type="catalytic activity">
    <reaction evidence="1">
        <text>[protein]-L-isoaspartate + S-adenosyl-L-methionine = [protein]-L-isoaspartate alpha-methyl ester + S-adenosyl-L-homocysteine</text>
        <dbReference type="Rhea" id="RHEA:12705"/>
        <dbReference type="Rhea" id="RHEA-COMP:12143"/>
        <dbReference type="Rhea" id="RHEA-COMP:12144"/>
        <dbReference type="ChEBI" id="CHEBI:57856"/>
        <dbReference type="ChEBI" id="CHEBI:59789"/>
        <dbReference type="ChEBI" id="CHEBI:90596"/>
        <dbReference type="ChEBI" id="CHEBI:90598"/>
        <dbReference type="EC" id="2.1.1.77"/>
    </reaction>
</comment>
<comment type="subcellular location">
    <subcellularLocation>
        <location evidence="1">Cytoplasm</location>
    </subcellularLocation>
</comment>
<comment type="similarity">
    <text evidence="1">Belongs to the methyltransferase superfamily. L-isoaspartyl/D-aspartyl protein methyltransferase family.</text>
</comment>
<accession>Q87LQ6</accession>
<dbReference type="EC" id="2.1.1.77" evidence="1"/>
<dbReference type="EMBL" id="BA000031">
    <property type="protein sequence ID" value="BAC60818.1"/>
    <property type="molecule type" value="Genomic_DNA"/>
</dbReference>
<dbReference type="RefSeq" id="NP_798934.1">
    <property type="nucleotide sequence ID" value="NC_004603.1"/>
</dbReference>
<dbReference type="RefSeq" id="WP_005455562.1">
    <property type="nucleotide sequence ID" value="NC_004603.1"/>
</dbReference>
<dbReference type="SMR" id="Q87LQ6"/>
<dbReference type="GeneID" id="1190079"/>
<dbReference type="KEGG" id="vpa:VP2555"/>
<dbReference type="PATRIC" id="fig|223926.6.peg.2453"/>
<dbReference type="eggNOG" id="COG2518">
    <property type="taxonomic scope" value="Bacteria"/>
</dbReference>
<dbReference type="HOGENOM" id="CLU_055432_2_0_6"/>
<dbReference type="Proteomes" id="UP000002493">
    <property type="component" value="Chromosome 1"/>
</dbReference>
<dbReference type="GO" id="GO:0005737">
    <property type="term" value="C:cytoplasm"/>
    <property type="evidence" value="ECO:0007669"/>
    <property type="project" value="UniProtKB-SubCell"/>
</dbReference>
<dbReference type="GO" id="GO:0004719">
    <property type="term" value="F:protein-L-isoaspartate (D-aspartate) O-methyltransferase activity"/>
    <property type="evidence" value="ECO:0007669"/>
    <property type="project" value="UniProtKB-UniRule"/>
</dbReference>
<dbReference type="GO" id="GO:0032259">
    <property type="term" value="P:methylation"/>
    <property type="evidence" value="ECO:0007669"/>
    <property type="project" value="UniProtKB-KW"/>
</dbReference>
<dbReference type="GO" id="GO:0036211">
    <property type="term" value="P:protein modification process"/>
    <property type="evidence" value="ECO:0007669"/>
    <property type="project" value="UniProtKB-UniRule"/>
</dbReference>
<dbReference type="GO" id="GO:0030091">
    <property type="term" value="P:protein repair"/>
    <property type="evidence" value="ECO:0007669"/>
    <property type="project" value="UniProtKB-UniRule"/>
</dbReference>
<dbReference type="CDD" id="cd02440">
    <property type="entry name" value="AdoMet_MTases"/>
    <property type="match status" value="1"/>
</dbReference>
<dbReference type="FunFam" id="3.40.50.150:FF:000010">
    <property type="entry name" value="Protein-L-isoaspartate O-methyltransferase"/>
    <property type="match status" value="1"/>
</dbReference>
<dbReference type="Gene3D" id="3.40.50.150">
    <property type="entry name" value="Vaccinia Virus protein VP39"/>
    <property type="match status" value="1"/>
</dbReference>
<dbReference type="HAMAP" id="MF_00090">
    <property type="entry name" value="PIMT"/>
    <property type="match status" value="1"/>
</dbReference>
<dbReference type="InterPro" id="IPR000682">
    <property type="entry name" value="PCMT"/>
</dbReference>
<dbReference type="InterPro" id="IPR029063">
    <property type="entry name" value="SAM-dependent_MTases_sf"/>
</dbReference>
<dbReference type="NCBIfam" id="TIGR00080">
    <property type="entry name" value="pimt"/>
    <property type="match status" value="1"/>
</dbReference>
<dbReference type="NCBIfam" id="NF001453">
    <property type="entry name" value="PRK00312.1"/>
    <property type="match status" value="1"/>
</dbReference>
<dbReference type="PANTHER" id="PTHR11579">
    <property type="entry name" value="PROTEIN-L-ISOASPARTATE O-METHYLTRANSFERASE"/>
    <property type="match status" value="1"/>
</dbReference>
<dbReference type="PANTHER" id="PTHR11579:SF0">
    <property type="entry name" value="PROTEIN-L-ISOASPARTATE(D-ASPARTATE) O-METHYLTRANSFERASE"/>
    <property type="match status" value="1"/>
</dbReference>
<dbReference type="Pfam" id="PF01135">
    <property type="entry name" value="PCMT"/>
    <property type="match status" value="1"/>
</dbReference>
<dbReference type="SUPFAM" id="SSF53335">
    <property type="entry name" value="S-adenosyl-L-methionine-dependent methyltransferases"/>
    <property type="match status" value="1"/>
</dbReference>
<dbReference type="PROSITE" id="PS01279">
    <property type="entry name" value="PCMT"/>
    <property type="match status" value="1"/>
</dbReference>
<gene>
    <name evidence="1" type="primary">pcm</name>
    <name type="ordered locus">VP2555</name>
</gene>
<sequence>MSNPHADRLIAFLISSGIKDQRVLDAMHCLPRESFVSQAMMHQAYDNNALPIGQGQTISQPYIVARMTELLELQRASNVLEIGTGSGYQTAVLAQIVDHVYSVERIKSLQWEAKRRLKQLDIYNVSTKHGDGWLGWETKGPFDAIIVTAAAEVIPQALLSQLKDGGKMVIPVGDAEQQLLRIERKGDEYLSTVVEMVRFVPLVAGDLA</sequence>
<protein>
    <recommendedName>
        <fullName evidence="1">Protein-L-isoaspartate O-methyltransferase</fullName>
        <ecNumber evidence="1">2.1.1.77</ecNumber>
    </recommendedName>
    <alternativeName>
        <fullName evidence="1">L-isoaspartyl protein carboxyl methyltransferase</fullName>
    </alternativeName>
    <alternativeName>
        <fullName evidence="1">Protein L-isoaspartyl methyltransferase</fullName>
    </alternativeName>
    <alternativeName>
        <fullName evidence="1">Protein-beta-aspartate methyltransferase</fullName>
        <shortName evidence="1">PIMT</shortName>
    </alternativeName>
</protein>